<name>TOC1_SCHPO</name>
<evidence type="ECO:0000269" key="1">
    <source>
    </source>
</evidence>
<evidence type="ECO:0000269" key="2">
    <source>
    </source>
</evidence>
<evidence type="ECO:0000269" key="3">
    <source>
    </source>
</evidence>
<evidence type="ECO:0000303" key="4">
    <source>
    </source>
</evidence>
<evidence type="ECO:0000305" key="5">
    <source>
    </source>
</evidence>
<evidence type="ECO:0000312" key="6">
    <source>
        <dbReference type="PomBase" id="SPBP18G5.03"/>
    </source>
</evidence>
<comment type="function">
    <text evidence="5">Component of TORC1, which regulates multiple cellular processes to control cell growth in response to environmental signals. Tor2 is essential for growth. Nutrient limitation and environmental stress signals cause inactivation of TORC1. Active TORC1 positively controls cell growth and ribosome biogenesis by regulating ribosomal protein gene expression. TORC1 negatively controls G1 cell-cycle arrest, sexual development and amino acid uptake. Represses mating, meiosis and sporulation efficiency by interfering with the functions of the transcription factor ste11 and the meiosis-promoting RNA-binding protein mei2.</text>
</comment>
<comment type="subunit">
    <text evidence="2">The target of rapamycin complex 1 (TORC1) is composed of at least mip1, pop3/wat1, tco89, toc1 and tor2.</text>
</comment>
<comment type="subcellular location">
    <subcellularLocation>
        <location evidence="1">Cytoplasm</location>
    </subcellularLocation>
</comment>
<proteinExistence type="evidence at protein level"/>
<reference key="1">
    <citation type="journal article" date="2002" name="Nature">
        <title>The genome sequence of Schizosaccharomyces pombe.</title>
        <authorList>
            <person name="Wood V."/>
            <person name="Gwilliam R."/>
            <person name="Rajandream M.A."/>
            <person name="Lyne M.H."/>
            <person name="Lyne R."/>
            <person name="Stewart A."/>
            <person name="Sgouros J.G."/>
            <person name="Peat N."/>
            <person name="Hayles J."/>
            <person name="Baker S.G."/>
            <person name="Basham D."/>
            <person name="Bowman S."/>
            <person name="Brooks K."/>
            <person name="Brown D."/>
            <person name="Brown S."/>
            <person name="Chillingworth T."/>
            <person name="Churcher C.M."/>
            <person name="Collins M."/>
            <person name="Connor R."/>
            <person name="Cronin A."/>
            <person name="Davis P."/>
            <person name="Feltwell T."/>
            <person name="Fraser A."/>
            <person name="Gentles S."/>
            <person name="Goble A."/>
            <person name="Hamlin N."/>
            <person name="Harris D.E."/>
            <person name="Hidalgo J."/>
            <person name="Hodgson G."/>
            <person name="Holroyd S."/>
            <person name="Hornsby T."/>
            <person name="Howarth S."/>
            <person name="Huckle E.J."/>
            <person name="Hunt S."/>
            <person name="Jagels K."/>
            <person name="James K.D."/>
            <person name="Jones L."/>
            <person name="Jones M."/>
            <person name="Leather S."/>
            <person name="McDonald S."/>
            <person name="McLean J."/>
            <person name="Mooney P."/>
            <person name="Moule S."/>
            <person name="Mungall K.L."/>
            <person name="Murphy L.D."/>
            <person name="Niblett D."/>
            <person name="Odell C."/>
            <person name="Oliver K."/>
            <person name="O'Neil S."/>
            <person name="Pearson D."/>
            <person name="Quail M.A."/>
            <person name="Rabbinowitsch E."/>
            <person name="Rutherford K.M."/>
            <person name="Rutter S."/>
            <person name="Saunders D."/>
            <person name="Seeger K."/>
            <person name="Sharp S."/>
            <person name="Skelton J."/>
            <person name="Simmonds M.N."/>
            <person name="Squares R."/>
            <person name="Squares S."/>
            <person name="Stevens K."/>
            <person name="Taylor K."/>
            <person name="Taylor R.G."/>
            <person name="Tivey A."/>
            <person name="Walsh S.V."/>
            <person name="Warren T."/>
            <person name="Whitehead S."/>
            <person name="Woodward J.R."/>
            <person name="Volckaert G."/>
            <person name="Aert R."/>
            <person name="Robben J."/>
            <person name="Grymonprez B."/>
            <person name="Weltjens I."/>
            <person name="Vanstreels E."/>
            <person name="Rieger M."/>
            <person name="Schaefer M."/>
            <person name="Mueller-Auer S."/>
            <person name="Gabel C."/>
            <person name="Fuchs M."/>
            <person name="Duesterhoeft A."/>
            <person name="Fritzc C."/>
            <person name="Holzer E."/>
            <person name="Moestl D."/>
            <person name="Hilbert H."/>
            <person name="Borzym K."/>
            <person name="Langer I."/>
            <person name="Beck A."/>
            <person name="Lehrach H."/>
            <person name="Reinhardt R."/>
            <person name="Pohl T.M."/>
            <person name="Eger P."/>
            <person name="Zimmermann W."/>
            <person name="Wedler H."/>
            <person name="Wambutt R."/>
            <person name="Purnelle B."/>
            <person name="Goffeau A."/>
            <person name="Cadieu E."/>
            <person name="Dreano S."/>
            <person name="Gloux S."/>
            <person name="Lelaure V."/>
            <person name="Mottier S."/>
            <person name="Galibert F."/>
            <person name="Aves S.J."/>
            <person name="Xiang Z."/>
            <person name="Hunt C."/>
            <person name="Moore K."/>
            <person name="Hurst S.M."/>
            <person name="Lucas M."/>
            <person name="Rochet M."/>
            <person name="Gaillardin C."/>
            <person name="Tallada V.A."/>
            <person name="Garzon A."/>
            <person name="Thode G."/>
            <person name="Daga R.R."/>
            <person name="Cruzado L."/>
            <person name="Jimenez J."/>
            <person name="Sanchez M."/>
            <person name="del Rey F."/>
            <person name="Benito J."/>
            <person name="Dominguez A."/>
            <person name="Revuelta J.L."/>
            <person name="Moreno S."/>
            <person name="Armstrong J."/>
            <person name="Forsburg S.L."/>
            <person name="Cerutti L."/>
            <person name="Lowe T."/>
            <person name="McCombie W.R."/>
            <person name="Paulsen I."/>
            <person name="Potashkin J."/>
            <person name="Shpakovski G.V."/>
            <person name="Ussery D."/>
            <person name="Barrell B.G."/>
            <person name="Nurse P."/>
        </authorList>
    </citation>
    <scope>NUCLEOTIDE SEQUENCE [LARGE SCALE GENOMIC DNA]</scope>
    <source>
        <strain>972 / ATCC 24843</strain>
    </source>
</reference>
<reference key="2">
    <citation type="journal article" date="2006" name="Nat. Biotechnol.">
        <title>ORFeome cloning and global analysis of protein localization in the fission yeast Schizosaccharomyces pombe.</title>
        <authorList>
            <person name="Matsuyama A."/>
            <person name="Arai R."/>
            <person name="Yashiroda Y."/>
            <person name="Shirai A."/>
            <person name="Kamata A."/>
            <person name="Sekido S."/>
            <person name="Kobayashi Y."/>
            <person name="Hashimoto A."/>
            <person name="Hamamoto M."/>
            <person name="Hiraoka Y."/>
            <person name="Horinouchi S."/>
            <person name="Yoshida M."/>
        </authorList>
    </citation>
    <scope>SUBCELLULAR LOCATION [LARGE SCALE ANALYSIS]</scope>
</reference>
<reference key="3">
    <citation type="journal article" date="2007" name="Genes Cells">
        <title>Rapamycin sensitivity of the Schizosaccharomyces pombe tor2 mutant and organization of two highly phosphorylated TOR complexes by specific and common subunits.</title>
        <authorList>
            <person name="Hayashi T."/>
            <person name="Hatanaka M."/>
            <person name="Nagao K."/>
            <person name="Nakaseko Y."/>
            <person name="Kanoh J."/>
            <person name="Kokubu A."/>
            <person name="Ebe M."/>
            <person name="Yanagida M."/>
        </authorList>
    </citation>
    <scope>IDENTIFICATION IN THE TORC1 COMPLEX</scope>
    <scope>IDENTIFICATION BY MASS SPECTROMETRY</scope>
</reference>
<reference key="4">
    <citation type="journal article" date="2008" name="J. Proteome Res.">
        <title>Phosphoproteome analysis of fission yeast.</title>
        <authorList>
            <person name="Wilson-Grady J.T."/>
            <person name="Villen J."/>
            <person name="Gygi S.P."/>
        </authorList>
    </citation>
    <scope>PHOSPHORYLATION [LARGE SCALE ANALYSIS] AT SER-204 AND SER-399</scope>
    <scope>IDENTIFICATION BY MASS SPECTROMETRY</scope>
</reference>
<sequence>MQLQSPFGDGISCECLNIRVLGIPNETKHQWIFVPRDLIKIKIYSLLQICKAENCSAVACRGCNLCILAVQGNIEISEEPQKLFQEENVKVYIYDSAISLSSVRASFPISELGIRMDIIKARAEPREDEIRASFSSLVNKEIKRTVEELLLSKRSTNRLSLLAFMRNQQLNYEAYETKLLEDASTIEKSLEKEVKTIYDSNIASPKESSDAIDADHAMIDESRSTQRRKSKPKKHVAFTDEYQVAFSDKPGKYFNQPMQYSKQFKLDNPDYEASSDSLNDIENLSTLTFRSDEELEFDFDTNNINNNKSGDSLEMSTTIPSDEENEDFTSKVDAMEIHSGSLPLNIDSSPIFTNHSPSSSLSSESSFEASPSSFVDRKNRWIQMLKKADEHSRSIQARSMGYVLSDDLDNSKAFRPYKQSFLAQGWKSLN</sequence>
<feature type="chain" id="PRO_0000304016" description="Target of rapamycin complex 1 subunit toc1">
    <location>
        <begin position="1"/>
        <end position="430"/>
    </location>
</feature>
<feature type="modified residue" description="Phosphoserine" evidence="3">
    <location>
        <position position="204"/>
    </location>
</feature>
<feature type="modified residue" description="Phosphoserine" evidence="3">
    <location>
        <position position="399"/>
    </location>
</feature>
<protein>
    <recommendedName>
        <fullName evidence="4">Target of rapamycin complex 1 subunit toc1</fullName>
        <shortName>TORC1 subunit toc1</shortName>
    </recommendedName>
</protein>
<dbReference type="EMBL" id="CU329671">
    <property type="protein sequence ID" value="CAC21491.1"/>
    <property type="molecule type" value="Genomic_DNA"/>
</dbReference>
<dbReference type="RefSeq" id="NP_595993.1">
    <property type="nucleotide sequence ID" value="NM_001021900.2"/>
</dbReference>
<dbReference type="SMR" id="Q9HDW0"/>
<dbReference type="BioGRID" id="277822">
    <property type="interactions" value="38"/>
</dbReference>
<dbReference type="FunCoup" id="Q9HDW0">
    <property type="interactions" value="7"/>
</dbReference>
<dbReference type="IntAct" id="Q9HDW0">
    <property type="interactions" value="1"/>
</dbReference>
<dbReference type="STRING" id="284812.Q9HDW0"/>
<dbReference type="iPTMnet" id="Q9HDW0"/>
<dbReference type="PaxDb" id="4896-SPBP18G5.03.1"/>
<dbReference type="EnsemblFungi" id="SPBP18G5.03.1">
    <property type="protein sequence ID" value="SPBP18G5.03.1:pep"/>
    <property type="gene ID" value="SPBP18G5.03"/>
</dbReference>
<dbReference type="GeneID" id="2541310"/>
<dbReference type="KEGG" id="spo:2541310"/>
<dbReference type="PomBase" id="SPBP18G5.03">
    <property type="gene designation" value="toc1"/>
</dbReference>
<dbReference type="VEuPathDB" id="FungiDB:SPBP18G5.03"/>
<dbReference type="HOGENOM" id="CLU_638031_0_0_1"/>
<dbReference type="InParanoid" id="Q9HDW0"/>
<dbReference type="OMA" id="PMTIQSS"/>
<dbReference type="PRO" id="PR:Q9HDW0"/>
<dbReference type="Proteomes" id="UP000002485">
    <property type="component" value="Chromosome II"/>
</dbReference>
<dbReference type="GO" id="GO:0005829">
    <property type="term" value="C:cytosol"/>
    <property type="evidence" value="ECO:0007005"/>
    <property type="project" value="PomBase"/>
</dbReference>
<dbReference type="GO" id="GO:0031931">
    <property type="term" value="C:TORC1 complex"/>
    <property type="evidence" value="ECO:0000353"/>
    <property type="project" value="PomBase"/>
</dbReference>
<dbReference type="GO" id="GO:0051321">
    <property type="term" value="P:meiotic cell cycle"/>
    <property type="evidence" value="ECO:0007669"/>
    <property type="project" value="UniProtKB-KW"/>
</dbReference>
<dbReference type="GO" id="GO:0030435">
    <property type="term" value="P:sporulation resulting in formation of a cellular spore"/>
    <property type="evidence" value="ECO:0007669"/>
    <property type="project" value="UniProtKB-KW"/>
</dbReference>
<dbReference type="GO" id="GO:0038202">
    <property type="term" value="P:TORC1 signaling"/>
    <property type="evidence" value="ECO:0000353"/>
    <property type="project" value="PomBase"/>
</dbReference>
<gene>
    <name evidence="4" type="primary">toc1</name>
    <name evidence="6" type="ORF">SPBP18G5.03</name>
</gene>
<accession>Q9HDW0</accession>
<organism>
    <name type="scientific">Schizosaccharomyces pombe (strain 972 / ATCC 24843)</name>
    <name type="common">Fission yeast</name>
    <dbReference type="NCBI Taxonomy" id="284812"/>
    <lineage>
        <taxon>Eukaryota</taxon>
        <taxon>Fungi</taxon>
        <taxon>Dikarya</taxon>
        <taxon>Ascomycota</taxon>
        <taxon>Taphrinomycotina</taxon>
        <taxon>Schizosaccharomycetes</taxon>
        <taxon>Schizosaccharomycetales</taxon>
        <taxon>Schizosaccharomycetaceae</taxon>
        <taxon>Schizosaccharomyces</taxon>
    </lineage>
</organism>
<keyword id="KW-0131">Cell cycle</keyword>
<keyword id="KW-0963">Cytoplasm</keyword>
<keyword id="KW-0469">Meiosis</keyword>
<keyword id="KW-0597">Phosphoprotein</keyword>
<keyword id="KW-1185">Reference proteome</keyword>
<keyword id="KW-0749">Sporulation</keyword>